<organism>
    <name type="scientific">Pongo pygmaeus</name>
    <name type="common">Bornean orangutan</name>
    <dbReference type="NCBI Taxonomy" id="9600"/>
    <lineage>
        <taxon>Eukaryota</taxon>
        <taxon>Metazoa</taxon>
        <taxon>Chordata</taxon>
        <taxon>Craniata</taxon>
        <taxon>Vertebrata</taxon>
        <taxon>Euteleostomi</taxon>
        <taxon>Mammalia</taxon>
        <taxon>Eutheria</taxon>
        <taxon>Euarchontoglires</taxon>
        <taxon>Primates</taxon>
        <taxon>Haplorrhini</taxon>
        <taxon>Catarrhini</taxon>
        <taxon>Hominidae</taxon>
        <taxon>Pongo</taxon>
    </lineage>
</organism>
<feature type="chain" id="PRO_0000069679" description="Histamine H1 receptor">
    <location>
        <begin position="1"/>
        <end position="487"/>
    </location>
</feature>
<feature type="topological domain" description="Extracellular" evidence="6">
    <location>
        <begin position="1"/>
        <end position="29"/>
    </location>
</feature>
<feature type="transmembrane region" description="Helical; Name=1" evidence="1">
    <location>
        <begin position="30"/>
        <end position="50"/>
    </location>
</feature>
<feature type="topological domain" description="Cytoplasmic" evidence="6">
    <location>
        <begin position="51"/>
        <end position="64"/>
    </location>
</feature>
<feature type="transmembrane region" description="Helical; Name=2" evidence="1">
    <location>
        <begin position="65"/>
        <end position="89"/>
    </location>
</feature>
<feature type="topological domain" description="Extracellular" evidence="6">
    <location>
        <begin position="90"/>
        <end position="97"/>
    </location>
</feature>
<feature type="transmembrane region" description="Helical; Name=3" evidence="1">
    <location>
        <begin position="98"/>
        <end position="123"/>
    </location>
</feature>
<feature type="topological domain" description="Cytoplasmic" evidence="6">
    <location>
        <begin position="124"/>
        <end position="144"/>
    </location>
</feature>
<feature type="transmembrane region" description="Helical; Name=4" evidence="1">
    <location>
        <begin position="145"/>
        <end position="164"/>
    </location>
</feature>
<feature type="topological domain" description="Extracellular" evidence="6">
    <location>
        <begin position="165"/>
        <end position="188"/>
    </location>
</feature>
<feature type="transmembrane region" description="Helical; Name=5" evidence="1">
    <location>
        <begin position="189"/>
        <end position="211"/>
    </location>
</feature>
<feature type="topological domain" description="Cytoplasmic" evidence="6">
    <location>
        <begin position="212"/>
        <end position="416"/>
    </location>
</feature>
<feature type="transmembrane region" description="Helical; Name=6" evidence="1">
    <location>
        <begin position="417"/>
        <end position="440"/>
    </location>
</feature>
<feature type="topological domain" description="Extracellular" evidence="6">
    <location>
        <begin position="441"/>
        <end position="446"/>
    </location>
</feature>
<feature type="transmembrane region" description="Helical; Name=7" evidence="1">
    <location>
        <begin position="447"/>
        <end position="469"/>
    </location>
</feature>
<feature type="topological domain" description="Cytoplasmic" evidence="6">
    <location>
        <begin position="470"/>
        <end position="487"/>
    </location>
</feature>
<feature type="region of interest" description="Important for agonist binding" evidence="1">
    <location>
        <begin position="107"/>
        <end position="112"/>
    </location>
</feature>
<feature type="region of interest" description="Disordered" evidence="5">
    <location>
        <begin position="238"/>
        <end position="286"/>
    </location>
</feature>
<feature type="region of interest" description="Disordered" evidence="5">
    <location>
        <begin position="345"/>
        <end position="379"/>
    </location>
</feature>
<feature type="region of interest" description="Important for agonist binding" evidence="1">
    <location>
        <begin position="424"/>
        <end position="428"/>
    </location>
</feature>
<feature type="compositionally biased region" description="Basic and acidic residues" evidence="5">
    <location>
        <begin position="238"/>
        <end position="261"/>
    </location>
</feature>
<feature type="compositionally biased region" description="Polar residues" evidence="5">
    <location>
        <begin position="353"/>
        <end position="369"/>
    </location>
</feature>
<feature type="binding site" evidence="1">
    <location>
        <position position="107"/>
    </location>
    <ligand>
        <name>histamine</name>
        <dbReference type="ChEBI" id="CHEBI:58432"/>
    </ligand>
</feature>
<feature type="binding site" evidence="1">
    <location>
        <position position="112"/>
    </location>
    <ligand>
        <name>histamine</name>
        <dbReference type="ChEBI" id="CHEBI:58432"/>
    </ligand>
</feature>
<feature type="binding site" evidence="1">
    <location>
        <position position="198"/>
    </location>
    <ligand>
        <name>histamine</name>
        <dbReference type="ChEBI" id="CHEBI:58432"/>
    </ligand>
</feature>
<feature type="binding site" evidence="1">
    <location>
        <position position="431"/>
    </location>
    <ligand>
        <name>histamine</name>
        <dbReference type="ChEBI" id="CHEBI:58432"/>
    </ligand>
</feature>
<feature type="modified residue" description="Phosphothreonine" evidence="1">
    <location>
        <position position="140"/>
    </location>
</feature>
<feature type="modified residue" description="Phosphothreonine" evidence="1">
    <location>
        <position position="142"/>
    </location>
</feature>
<feature type="modified residue" description="Phosphoserine" evidence="1">
    <location>
        <position position="230"/>
    </location>
</feature>
<feature type="modified residue" description="Phosphothreonine" evidence="1">
    <location>
        <position position="279"/>
    </location>
</feature>
<feature type="modified residue" description="Phosphoserine" evidence="2">
    <location>
        <position position="344"/>
    </location>
</feature>
<feature type="modified residue" description="Phosphoserine" evidence="2">
    <location>
        <position position="347"/>
    </location>
</feature>
<feature type="modified residue" description="Phosphoserine" evidence="2">
    <location>
        <position position="380"/>
    </location>
</feature>
<feature type="modified residue" description="Phosphoserine" evidence="1">
    <location>
        <position position="396"/>
    </location>
</feature>
<feature type="modified residue" description="Phosphoserine" evidence="1">
    <location>
        <position position="398"/>
    </location>
</feature>
<feature type="glycosylation site" description="N-linked (GlcNAc...) asparagine" evidence="3">
    <location>
        <position position="5"/>
    </location>
</feature>
<feature type="glycosylation site" description="N-linked (GlcNAc...) asparagine" evidence="3">
    <location>
        <position position="18"/>
    </location>
</feature>
<feature type="disulfide bond" evidence="4">
    <location>
        <begin position="100"/>
        <end position="180"/>
    </location>
</feature>
<feature type="disulfide bond" evidence="4">
    <location>
        <begin position="441"/>
        <end position="444"/>
    </location>
</feature>
<proteinExistence type="inferred from homology"/>
<accession>Q9N2B0</accession>
<reference key="1">
    <citation type="journal article" date="2004" name="Mol. Biol. Evol.">
        <title>Human-specific amino acid changes found in 103 protein-coding genes.</title>
        <authorList>
            <person name="Kitano T."/>
            <person name="Liu Y.-H."/>
            <person name="Ueda S."/>
            <person name="Saitou N."/>
        </authorList>
    </citation>
    <scope>NUCLEOTIDE SEQUENCE [GENOMIC DNA]</scope>
    <source>
        <strain>Isolate oran-Po13</strain>
    </source>
</reference>
<gene>
    <name evidence="1" type="primary">HRH1</name>
</gene>
<comment type="function">
    <text evidence="1 2">G-protein-coupled receptor for histamine, a biogenic amine that functions as an immune modulator and a neurotransmitter (By similarity). Through the H1 receptor, histamine mediates the contraction of smooth muscles and increases capillary permeability due to contraction of terminal venules. Also mediates neurotransmission in the central nervous system and thereby regulates circadian rhythms, emotional and locomotor activities as well as cognitive functions (By similarity).</text>
</comment>
<comment type="subcellular location">
    <subcellularLocation>
        <location evidence="1">Cell membrane</location>
        <topology evidence="1">Multi-pass membrane protein</topology>
    </subcellularLocation>
</comment>
<comment type="domain">
    <text evidence="1">Histamine activates the receptor by forming hydrogen bonds with transmembrane domains 3 and 6, squashing the ligand-binding pocket on the extracellular side and opening the cavity for G-protein engagement on the intracellular side.</text>
</comment>
<comment type="PTM">
    <text evidence="1">Phosphorylation at sites in the second and third cytoplasmic loops independently contribute to agonist-induced receptor down-regulation.</text>
</comment>
<comment type="similarity">
    <text evidence="4">Belongs to the G-protein coupled receptor 1 family.</text>
</comment>
<sequence>MSLPNSSCLLEDKMCEGNKTTMASPQLMPLVVVLSTISLVTVGLNLLVLYAVRSERKLHTVGNLYIVSLSVADLIVGAVVMPMNILYLLMSKWSLGRPLCLFWLSMDYVASTASIFSVFILCIDRYRSVQQPLRYLKYRTKTRASATILGAWFLSFLWVIPILGWNHFRQQISVRREDKCETDFYDVTWFKVMTAIINFYLPTLLMLWFYAKIYKAVQKHCQHRELINGSLPSFSEIKLRPENPKGDAKKPGKESPWEVLKRKPKDAGGGSVLKSPSQTPKEMKSPVVFSQEDDGEVDKLHCFPLDIVQMQTVAEGSSRDYVAINQSHGQLKTDEQGLNTHGASEISEDQMLGDSQSFSRTDSDTTTETAPGKGKLRSGSNTGLDYIKFTWKRLRSHSRQYVSGLHMNRERKAAKQLGFIMAAFILCWIPYFIFFMVIAFCKNCCNEHLHMFTIWLGYINSTLNPLIYPLCNENFKKTFKRILHIRS</sequence>
<evidence type="ECO:0000250" key="1">
    <source>
        <dbReference type="UniProtKB" id="P35367"/>
    </source>
</evidence>
<evidence type="ECO:0000250" key="2">
    <source>
        <dbReference type="UniProtKB" id="P70174"/>
    </source>
</evidence>
<evidence type="ECO:0000255" key="3"/>
<evidence type="ECO:0000255" key="4">
    <source>
        <dbReference type="PROSITE-ProRule" id="PRU00521"/>
    </source>
</evidence>
<evidence type="ECO:0000256" key="5">
    <source>
        <dbReference type="SAM" id="MobiDB-lite"/>
    </source>
</evidence>
<evidence type="ECO:0000305" key="6"/>
<keyword id="KW-1003">Cell membrane</keyword>
<keyword id="KW-1015">Disulfide bond</keyword>
<keyword id="KW-0297">G-protein coupled receptor</keyword>
<keyword id="KW-0325">Glycoprotein</keyword>
<keyword id="KW-0472">Membrane</keyword>
<keyword id="KW-0597">Phosphoprotein</keyword>
<keyword id="KW-0675">Receptor</keyword>
<keyword id="KW-0807">Transducer</keyword>
<keyword id="KW-0812">Transmembrane</keyword>
<keyword id="KW-1133">Transmembrane helix</keyword>
<dbReference type="EMBL" id="AB041383">
    <property type="protein sequence ID" value="BAA94468.1"/>
    <property type="molecule type" value="Genomic_DNA"/>
</dbReference>
<dbReference type="RefSeq" id="XP_054337295.1">
    <property type="nucleotide sequence ID" value="XM_054481320.2"/>
</dbReference>
<dbReference type="RefSeq" id="XP_054337296.1">
    <property type="nucleotide sequence ID" value="XM_054481321.2"/>
</dbReference>
<dbReference type="RefSeq" id="XP_063517792.1">
    <property type="nucleotide sequence ID" value="XM_063661722.1"/>
</dbReference>
<dbReference type="SMR" id="Q9N2B0"/>
<dbReference type="GlyCosmos" id="Q9N2B0">
    <property type="glycosylation" value="2 sites, No reported glycans"/>
</dbReference>
<dbReference type="GeneID" id="129033196"/>
<dbReference type="GO" id="GO:0030425">
    <property type="term" value="C:dendrite"/>
    <property type="evidence" value="ECO:0007669"/>
    <property type="project" value="TreeGrafter"/>
</dbReference>
<dbReference type="GO" id="GO:0005886">
    <property type="term" value="C:plasma membrane"/>
    <property type="evidence" value="ECO:0000250"/>
    <property type="project" value="UniProtKB"/>
</dbReference>
<dbReference type="GO" id="GO:0045202">
    <property type="term" value="C:synapse"/>
    <property type="evidence" value="ECO:0007669"/>
    <property type="project" value="GOC"/>
</dbReference>
<dbReference type="GO" id="GO:0004993">
    <property type="term" value="F:G protein-coupled serotonin receptor activity"/>
    <property type="evidence" value="ECO:0007669"/>
    <property type="project" value="TreeGrafter"/>
</dbReference>
<dbReference type="GO" id="GO:0004969">
    <property type="term" value="F:histamine receptor activity"/>
    <property type="evidence" value="ECO:0000250"/>
    <property type="project" value="UniProtKB"/>
</dbReference>
<dbReference type="GO" id="GO:0030594">
    <property type="term" value="F:neurotransmitter receptor activity"/>
    <property type="evidence" value="ECO:0007669"/>
    <property type="project" value="TreeGrafter"/>
</dbReference>
<dbReference type="GO" id="GO:0071420">
    <property type="term" value="P:cellular response to histamine"/>
    <property type="evidence" value="ECO:0000250"/>
    <property type="project" value="UniProtKB"/>
</dbReference>
<dbReference type="GO" id="GO:0007268">
    <property type="term" value="P:chemical synaptic transmission"/>
    <property type="evidence" value="ECO:0007669"/>
    <property type="project" value="TreeGrafter"/>
</dbReference>
<dbReference type="GO" id="GO:0007186">
    <property type="term" value="P:G protein-coupled receptor signaling pathway"/>
    <property type="evidence" value="ECO:0000250"/>
    <property type="project" value="UniProtKB"/>
</dbReference>
<dbReference type="GO" id="GO:0007187">
    <property type="term" value="P:G protein-coupled receptor signaling pathway, coupled to cyclic nucleotide second messenger"/>
    <property type="evidence" value="ECO:0007669"/>
    <property type="project" value="TreeGrafter"/>
</dbReference>
<dbReference type="GO" id="GO:0045907">
    <property type="term" value="P:positive regulation of vasoconstriction"/>
    <property type="evidence" value="ECO:0007669"/>
    <property type="project" value="InterPro"/>
</dbReference>
<dbReference type="GO" id="GO:0043114">
    <property type="term" value="P:regulation of vascular permeability"/>
    <property type="evidence" value="ECO:0007669"/>
    <property type="project" value="InterPro"/>
</dbReference>
<dbReference type="CDD" id="cd15050">
    <property type="entry name" value="7tmA_Histamine_H1R"/>
    <property type="match status" value="1"/>
</dbReference>
<dbReference type="FunFam" id="1.20.1070.10:FF:000147">
    <property type="entry name" value="Histamine H1 receptor"/>
    <property type="match status" value="1"/>
</dbReference>
<dbReference type="FunFam" id="1.20.1070.10:FF:000189">
    <property type="entry name" value="Histamine H1 receptor"/>
    <property type="match status" value="1"/>
</dbReference>
<dbReference type="Gene3D" id="1.20.1070.10">
    <property type="entry name" value="Rhodopsin 7-helix transmembrane proteins"/>
    <property type="match status" value="2"/>
</dbReference>
<dbReference type="InterPro" id="IPR000276">
    <property type="entry name" value="GPCR_Rhodpsn"/>
</dbReference>
<dbReference type="InterPro" id="IPR017452">
    <property type="entry name" value="GPCR_Rhodpsn_7TM"/>
</dbReference>
<dbReference type="InterPro" id="IPR000921">
    <property type="entry name" value="Histamine_H1_rcpt"/>
</dbReference>
<dbReference type="PANTHER" id="PTHR24247">
    <property type="entry name" value="5-HYDROXYTRYPTAMINE RECEPTOR"/>
    <property type="match status" value="1"/>
</dbReference>
<dbReference type="PANTHER" id="PTHR24247:SF223">
    <property type="entry name" value="HISTAMINE H1 RECEPTOR"/>
    <property type="match status" value="1"/>
</dbReference>
<dbReference type="Pfam" id="PF00001">
    <property type="entry name" value="7tm_1"/>
    <property type="match status" value="1"/>
</dbReference>
<dbReference type="PRINTS" id="PR00237">
    <property type="entry name" value="GPCRRHODOPSN"/>
</dbReference>
<dbReference type="PRINTS" id="PR00530">
    <property type="entry name" value="HISTAMINEH1R"/>
</dbReference>
<dbReference type="SMART" id="SM01381">
    <property type="entry name" value="7TM_GPCR_Srsx"/>
    <property type="match status" value="1"/>
</dbReference>
<dbReference type="SUPFAM" id="SSF81321">
    <property type="entry name" value="Family A G protein-coupled receptor-like"/>
    <property type="match status" value="1"/>
</dbReference>
<dbReference type="PROSITE" id="PS00237">
    <property type="entry name" value="G_PROTEIN_RECEP_F1_1"/>
    <property type="match status" value="1"/>
</dbReference>
<dbReference type="PROSITE" id="PS50262">
    <property type="entry name" value="G_PROTEIN_RECEP_F1_2"/>
    <property type="match status" value="1"/>
</dbReference>
<name>HRH1_PONPY</name>
<protein>
    <recommendedName>
        <fullName evidence="1">Histamine H1 receptor</fullName>
        <shortName evidence="1">H1R</shortName>
        <shortName evidence="1">HH1R</shortName>
    </recommendedName>
</protein>